<proteinExistence type="inferred from homology"/>
<keyword id="KW-0687">Ribonucleoprotein</keyword>
<keyword id="KW-0689">Ribosomal protein</keyword>
<comment type="subunit">
    <text evidence="1">Part of the 50S ribosomal subunit. Contacts protein L32.</text>
</comment>
<comment type="similarity">
    <text evidence="1">Belongs to the bacterial ribosomal protein bL17 family.</text>
</comment>
<organism>
    <name type="scientific">Ruthia magnifica subsp. Calyptogena magnifica</name>
    <dbReference type="NCBI Taxonomy" id="413404"/>
    <lineage>
        <taxon>Bacteria</taxon>
        <taxon>Pseudomonadati</taxon>
        <taxon>Pseudomonadota</taxon>
        <taxon>Gammaproteobacteria</taxon>
        <taxon>Candidatus Pseudothioglobaceae</taxon>
        <taxon>Candidatus Ruthturnera</taxon>
    </lineage>
</organism>
<accession>A1AVM6</accession>
<name>RL17_RUTMC</name>
<evidence type="ECO:0000255" key="1">
    <source>
        <dbReference type="HAMAP-Rule" id="MF_01368"/>
    </source>
</evidence>
<evidence type="ECO:0000305" key="2"/>
<feature type="chain" id="PRO_1000055934" description="Large ribosomal subunit protein bL17">
    <location>
        <begin position="1"/>
        <end position="132"/>
    </location>
</feature>
<dbReference type="EMBL" id="CP000488">
    <property type="protein sequence ID" value="ABL01983.1"/>
    <property type="molecule type" value="Genomic_DNA"/>
</dbReference>
<dbReference type="RefSeq" id="WP_011737608.1">
    <property type="nucleotide sequence ID" value="NC_008610.1"/>
</dbReference>
<dbReference type="SMR" id="A1AVM6"/>
<dbReference type="STRING" id="413404.Rmag_0191"/>
<dbReference type="KEGG" id="rma:Rmag_0191"/>
<dbReference type="eggNOG" id="COG0203">
    <property type="taxonomic scope" value="Bacteria"/>
</dbReference>
<dbReference type="HOGENOM" id="CLU_074407_2_0_6"/>
<dbReference type="OrthoDB" id="9809073at2"/>
<dbReference type="Proteomes" id="UP000002587">
    <property type="component" value="Chromosome"/>
</dbReference>
<dbReference type="GO" id="GO:0022625">
    <property type="term" value="C:cytosolic large ribosomal subunit"/>
    <property type="evidence" value="ECO:0007669"/>
    <property type="project" value="TreeGrafter"/>
</dbReference>
<dbReference type="GO" id="GO:0003735">
    <property type="term" value="F:structural constituent of ribosome"/>
    <property type="evidence" value="ECO:0007669"/>
    <property type="project" value="InterPro"/>
</dbReference>
<dbReference type="GO" id="GO:0006412">
    <property type="term" value="P:translation"/>
    <property type="evidence" value="ECO:0007669"/>
    <property type="project" value="UniProtKB-UniRule"/>
</dbReference>
<dbReference type="FunFam" id="3.90.1030.10:FF:000001">
    <property type="entry name" value="50S ribosomal protein L17"/>
    <property type="match status" value="1"/>
</dbReference>
<dbReference type="Gene3D" id="3.90.1030.10">
    <property type="entry name" value="Ribosomal protein L17"/>
    <property type="match status" value="1"/>
</dbReference>
<dbReference type="HAMAP" id="MF_01368">
    <property type="entry name" value="Ribosomal_bL17"/>
    <property type="match status" value="1"/>
</dbReference>
<dbReference type="InterPro" id="IPR000456">
    <property type="entry name" value="Ribosomal_bL17"/>
</dbReference>
<dbReference type="InterPro" id="IPR047859">
    <property type="entry name" value="Ribosomal_bL17_CS"/>
</dbReference>
<dbReference type="InterPro" id="IPR036373">
    <property type="entry name" value="Ribosomal_bL17_sf"/>
</dbReference>
<dbReference type="NCBIfam" id="TIGR00059">
    <property type="entry name" value="L17"/>
    <property type="match status" value="1"/>
</dbReference>
<dbReference type="PANTHER" id="PTHR14413:SF16">
    <property type="entry name" value="LARGE RIBOSOMAL SUBUNIT PROTEIN BL17M"/>
    <property type="match status" value="1"/>
</dbReference>
<dbReference type="PANTHER" id="PTHR14413">
    <property type="entry name" value="RIBOSOMAL PROTEIN L17"/>
    <property type="match status" value="1"/>
</dbReference>
<dbReference type="Pfam" id="PF01196">
    <property type="entry name" value="Ribosomal_L17"/>
    <property type="match status" value="1"/>
</dbReference>
<dbReference type="SUPFAM" id="SSF64263">
    <property type="entry name" value="Prokaryotic ribosomal protein L17"/>
    <property type="match status" value="1"/>
</dbReference>
<dbReference type="PROSITE" id="PS01167">
    <property type="entry name" value="RIBOSOMAL_L17"/>
    <property type="match status" value="1"/>
</dbReference>
<sequence length="132" mass="15098">MRHRKSGRQLNRNSSHRKAMFKNMANSLFLHETIRTTLSKAKELRRVVEPLITKAKIDSVANRRNIFSKLRDDAIVAKLFTELAPFYKDRPGGYIRILKAGFRAGDKALMAIVQLVDFETTTDIVAETTDFS</sequence>
<gene>
    <name evidence="1" type="primary">rplQ</name>
    <name type="ordered locus">Rmag_0191</name>
</gene>
<reference key="1">
    <citation type="journal article" date="2007" name="Science">
        <title>The Calyptogena magnifica chemoautotrophic symbiont genome.</title>
        <authorList>
            <person name="Newton I.L.G."/>
            <person name="Woyke T."/>
            <person name="Auchtung T.A."/>
            <person name="Dilly G.F."/>
            <person name="Dutton R.J."/>
            <person name="Fisher M.C."/>
            <person name="Fontanez K.M."/>
            <person name="Lau E."/>
            <person name="Stewart F.J."/>
            <person name="Richardson P.M."/>
            <person name="Barry K.W."/>
            <person name="Saunders E."/>
            <person name="Detter J.C."/>
            <person name="Wu D."/>
            <person name="Eisen J.A."/>
            <person name="Cavanaugh C.M."/>
        </authorList>
    </citation>
    <scope>NUCLEOTIDE SEQUENCE [LARGE SCALE GENOMIC DNA]</scope>
</reference>
<protein>
    <recommendedName>
        <fullName evidence="1">Large ribosomal subunit protein bL17</fullName>
    </recommendedName>
    <alternativeName>
        <fullName evidence="2">50S ribosomal protein L17</fullName>
    </alternativeName>
</protein>